<proteinExistence type="predicted"/>
<protein>
    <recommendedName>
        <fullName>Uncharacterized protein y4kT</fullName>
    </recommendedName>
</protein>
<name>Y4KT_SINFN</name>
<dbReference type="EMBL" id="U00090">
    <property type="protein sequence ID" value="AAB91751.1"/>
    <property type="molecule type" value="Genomic_DNA"/>
</dbReference>
<dbReference type="PIR" id="T10874">
    <property type="entry name" value="T10874"/>
</dbReference>
<dbReference type="RefSeq" id="NP_443949.1">
    <property type="nucleotide sequence ID" value="NC_000914.2"/>
</dbReference>
<dbReference type="RefSeq" id="WP_010875301.1">
    <property type="nucleotide sequence ID" value="NC_000914.2"/>
</dbReference>
<dbReference type="SMR" id="P55538"/>
<dbReference type="KEGG" id="rhi:NGR_a02760"/>
<dbReference type="PATRIC" id="fig|394.7.peg.294"/>
<dbReference type="eggNOG" id="COG1657">
    <property type="taxonomic scope" value="Bacteria"/>
</dbReference>
<dbReference type="HOGENOM" id="CLU_041269_0_0_5"/>
<dbReference type="OrthoDB" id="9758578at2"/>
<dbReference type="Proteomes" id="UP000001054">
    <property type="component" value="Plasmid pNGR234a"/>
</dbReference>
<dbReference type="GO" id="GO:0000287">
    <property type="term" value="F:magnesium ion binding"/>
    <property type="evidence" value="ECO:0007669"/>
    <property type="project" value="TreeGrafter"/>
</dbReference>
<dbReference type="GO" id="GO:0010333">
    <property type="term" value="F:terpene synthase activity"/>
    <property type="evidence" value="ECO:0007669"/>
    <property type="project" value="InterPro"/>
</dbReference>
<dbReference type="GO" id="GO:0016102">
    <property type="term" value="P:diterpenoid biosynthetic process"/>
    <property type="evidence" value="ECO:0007669"/>
    <property type="project" value="TreeGrafter"/>
</dbReference>
<dbReference type="CDD" id="cd00688">
    <property type="entry name" value="ISOPREN_C2_like"/>
    <property type="match status" value="1"/>
</dbReference>
<dbReference type="Gene3D" id="1.50.10.160">
    <property type="match status" value="1"/>
</dbReference>
<dbReference type="Gene3D" id="1.50.10.20">
    <property type="match status" value="1"/>
</dbReference>
<dbReference type="InterPro" id="IPR050148">
    <property type="entry name" value="Terpene_synthase-like"/>
</dbReference>
<dbReference type="InterPro" id="IPR008930">
    <property type="entry name" value="Terpenoid_cyclase/PrenylTrfase"/>
</dbReference>
<dbReference type="PANTHER" id="PTHR31739:SF25">
    <property type="entry name" value="(E,E)-GERANYLLINALOOL SYNTHASE"/>
    <property type="match status" value="1"/>
</dbReference>
<dbReference type="PANTHER" id="PTHR31739">
    <property type="entry name" value="ENT-COPALYL DIPHOSPHATE SYNTHASE, CHLOROPLASTIC"/>
    <property type="match status" value="1"/>
</dbReference>
<dbReference type="SUPFAM" id="SSF48239">
    <property type="entry name" value="Terpenoid cyclases/Protein prenyltransferases"/>
    <property type="match status" value="2"/>
</dbReference>
<sequence length="516" mass="55109">MNALSEQILFELRHLLSEMSDGGSVGPSVYDTARALQFGGNVTGRQDAYAWLLAQQQADGGWGSADFPLFRHAPTWAALLALQRADPLPGAADAVQAATRFLERQADPYAHAVPEDAPIGAELILPQLCGEAASLLGGVAFPRHPALLPLRQACLVKLGAVATLPSGHPLLHSWEAWGTWPTAACPDDDGSIGISPAATAAWRAHAVTQGSTPQVGRADAYLQAASRATRSGIEGVVPNVWPINVFEPCWSLYTLHLAGLFAHPALDEAVRVIVAQLDARLGVRGLGPALHFAADADDTAVALCVLRLAGRDPAVDALRHFEIGELFVTFPGERNASVSTNIHALHALRLLGKPAAGTSAYVEANRNPHGLWDNEKWHVSWLYPTAHAVAALAQGKPQWRDERALAALLQAQRDDGGWGAGRASTFEETAYALFALHVMDGSEEPTGRRRIAQAVARALEWMLARHAAPALPQMPLWIGKELYCPIRVVRVAELAGLWLALRWGPRVPAEGAGAAP</sequence>
<accession>P55538</accession>
<reference key="1">
    <citation type="journal article" date="1997" name="Nature">
        <title>Molecular basis of symbiosis between Rhizobium and legumes.</title>
        <authorList>
            <person name="Freiberg C.A."/>
            <person name="Fellay R."/>
            <person name="Bairoch A."/>
            <person name="Broughton W.J."/>
            <person name="Rosenthal A."/>
            <person name="Perret X."/>
        </authorList>
    </citation>
    <scope>NUCLEOTIDE SEQUENCE [LARGE SCALE GENOMIC DNA]</scope>
    <source>
        <strain>NBRC 101917 / NGR234</strain>
    </source>
</reference>
<reference key="2">
    <citation type="journal article" date="2009" name="Appl. Environ. Microbiol.">
        <title>Rhizobium sp. strain NGR234 possesses a remarkable number of secretion systems.</title>
        <authorList>
            <person name="Schmeisser C."/>
            <person name="Liesegang H."/>
            <person name="Krysciak D."/>
            <person name="Bakkou N."/>
            <person name="Le Quere A."/>
            <person name="Wollherr A."/>
            <person name="Heinemeyer I."/>
            <person name="Morgenstern B."/>
            <person name="Pommerening-Roeser A."/>
            <person name="Flores M."/>
            <person name="Palacios R."/>
            <person name="Brenner S."/>
            <person name="Gottschalk G."/>
            <person name="Schmitz R.A."/>
            <person name="Broughton W.J."/>
            <person name="Perret X."/>
            <person name="Strittmatter A.W."/>
            <person name="Streit W.R."/>
        </authorList>
    </citation>
    <scope>NUCLEOTIDE SEQUENCE [LARGE SCALE GENOMIC DNA]</scope>
    <source>
        <strain>NBRC 101917 / NGR234</strain>
    </source>
</reference>
<feature type="chain" id="PRO_0000200899" description="Uncharacterized protein y4kT">
    <location>
        <begin position="1"/>
        <end position="516"/>
    </location>
</feature>
<feature type="repeat" description="PFTB 1">
    <location>
        <begin position="45"/>
        <end position="86"/>
    </location>
</feature>
<feature type="repeat" description="PFTB 2">
    <location>
        <begin position="401"/>
        <end position="443"/>
    </location>
</feature>
<gene>
    <name type="ordered locus">NGR_a02760</name>
    <name type="ORF">y4kT</name>
</gene>
<organism>
    <name type="scientific">Sinorhizobium fredii (strain NBRC 101917 / NGR234)</name>
    <dbReference type="NCBI Taxonomy" id="394"/>
    <lineage>
        <taxon>Bacteria</taxon>
        <taxon>Pseudomonadati</taxon>
        <taxon>Pseudomonadota</taxon>
        <taxon>Alphaproteobacteria</taxon>
        <taxon>Hyphomicrobiales</taxon>
        <taxon>Rhizobiaceae</taxon>
        <taxon>Sinorhizobium/Ensifer group</taxon>
        <taxon>Sinorhizobium</taxon>
    </lineage>
</organism>
<geneLocation type="plasmid">
    <name>sym pNGR234a</name>
</geneLocation>
<keyword id="KW-0614">Plasmid</keyword>
<keyword id="KW-1185">Reference proteome</keyword>
<keyword id="KW-0677">Repeat</keyword>